<accession>B7NUA1</accession>
<organism>
    <name type="scientific">Escherichia coli O7:K1 (strain IAI39 / ExPEC)</name>
    <dbReference type="NCBI Taxonomy" id="585057"/>
    <lineage>
        <taxon>Bacteria</taxon>
        <taxon>Pseudomonadati</taxon>
        <taxon>Pseudomonadota</taxon>
        <taxon>Gammaproteobacteria</taxon>
        <taxon>Enterobacterales</taxon>
        <taxon>Enterobacteriaceae</taxon>
        <taxon>Escherichia</taxon>
    </lineage>
</organism>
<reference key="1">
    <citation type="journal article" date="2009" name="PLoS Genet.">
        <title>Organised genome dynamics in the Escherichia coli species results in highly diverse adaptive paths.</title>
        <authorList>
            <person name="Touchon M."/>
            <person name="Hoede C."/>
            <person name="Tenaillon O."/>
            <person name="Barbe V."/>
            <person name="Baeriswyl S."/>
            <person name="Bidet P."/>
            <person name="Bingen E."/>
            <person name="Bonacorsi S."/>
            <person name="Bouchier C."/>
            <person name="Bouvet O."/>
            <person name="Calteau A."/>
            <person name="Chiapello H."/>
            <person name="Clermont O."/>
            <person name="Cruveiller S."/>
            <person name="Danchin A."/>
            <person name="Diard M."/>
            <person name="Dossat C."/>
            <person name="Karoui M.E."/>
            <person name="Frapy E."/>
            <person name="Garry L."/>
            <person name="Ghigo J.M."/>
            <person name="Gilles A.M."/>
            <person name="Johnson J."/>
            <person name="Le Bouguenec C."/>
            <person name="Lescat M."/>
            <person name="Mangenot S."/>
            <person name="Martinez-Jehanne V."/>
            <person name="Matic I."/>
            <person name="Nassif X."/>
            <person name="Oztas S."/>
            <person name="Petit M.A."/>
            <person name="Pichon C."/>
            <person name="Rouy Z."/>
            <person name="Ruf C.S."/>
            <person name="Schneider D."/>
            <person name="Tourret J."/>
            <person name="Vacherie B."/>
            <person name="Vallenet D."/>
            <person name="Medigue C."/>
            <person name="Rocha E.P.C."/>
            <person name="Denamur E."/>
        </authorList>
    </citation>
    <scope>NUCLEOTIDE SEQUENCE [LARGE SCALE GENOMIC DNA]</scope>
    <source>
        <strain>IAI39 / ExPEC</strain>
    </source>
</reference>
<sequence>MTVLHSVDFFPSGNASVAIEPRLPQADFPEHHHDFHEIVIVEHGTGIHVFNGQPYTITGGTVCFVRDHDRHLYEHTDNLCLTNVLYRSPDRFQFLAGLNQLLPQEQDGQYPSHWRVNHSVLQQVRQLVAQMEQQEEENDLPSTASREILFMQLLLLLRKSSLQENLENSASRLNLLLAWLEDHFADEVNWDAVADQFSLSLRTLHRQLKQKTGLTPQRYLNRLRLMKARHLLRHSEASVTDIAYRCGFSDSNHFSTLFRREFNWSPRDIRQGRDGFLQ</sequence>
<dbReference type="EMBL" id="CU928164">
    <property type="protein sequence ID" value="CAR19209.1"/>
    <property type="molecule type" value="Genomic_DNA"/>
</dbReference>
<dbReference type="RefSeq" id="WP_000217149.1">
    <property type="nucleotide sequence ID" value="NC_011750.1"/>
</dbReference>
<dbReference type="RefSeq" id="YP_002409020.1">
    <property type="nucleotide sequence ID" value="NC_011750.1"/>
</dbReference>
<dbReference type="SMR" id="B7NUA1"/>
<dbReference type="STRING" id="585057.ECIAI39_3090"/>
<dbReference type="KEGG" id="ect:ECIAI39_3090"/>
<dbReference type="PATRIC" id="fig|585057.6.peg.3204"/>
<dbReference type="HOGENOM" id="CLU_000445_88_5_6"/>
<dbReference type="Proteomes" id="UP000000749">
    <property type="component" value="Chromosome"/>
</dbReference>
<dbReference type="GO" id="GO:0005737">
    <property type="term" value="C:cytoplasm"/>
    <property type="evidence" value="ECO:0007669"/>
    <property type="project" value="UniProtKB-SubCell"/>
</dbReference>
<dbReference type="GO" id="GO:0003700">
    <property type="term" value="F:DNA-binding transcription factor activity"/>
    <property type="evidence" value="ECO:0007669"/>
    <property type="project" value="UniProtKB-UniRule"/>
</dbReference>
<dbReference type="GO" id="GO:0043565">
    <property type="term" value="F:sequence-specific DNA binding"/>
    <property type="evidence" value="ECO:0007669"/>
    <property type="project" value="InterPro"/>
</dbReference>
<dbReference type="GO" id="GO:0045893">
    <property type="term" value="P:positive regulation of DNA-templated transcription"/>
    <property type="evidence" value="ECO:0007669"/>
    <property type="project" value="UniProtKB-UniRule"/>
</dbReference>
<dbReference type="GO" id="GO:0019299">
    <property type="term" value="P:rhamnose metabolic process"/>
    <property type="evidence" value="ECO:0007669"/>
    <property type="project" value="UniProtKB-UniRule"/>
</dbReference>
<dbReference type="CDD" id="cd06977">
    <property type="entry name" value="cupin_RhaR_RhaS-like_N"/>
    <property type="match status" value="1"/>
</dbReference>
<dbReference type="FunFam" id="1.10.10.60:FF:000181">
    <property type="entry name" value="HTH-type transcriptional activator RhaS"/>
    <property type="match status" value="1"/>
</dbReference>
<dbReference type="FunFam" id="2.60.120.10:FF:000041">
    <property type="entry name" value="HTH-type transcriptional activator RhaS"/>
    <property type="match status" value="1"/>
</dbReference>
<dbReference type="Gene3D" id="1.10.10.60">
    <property type="entry name" value="Homeodomain-like"/>
    <property type="match status" value="1"/>
</dbReference>
<dbReference type="Gene3D" id="2.60.120.10">
    <property type="entry name" value="Jelly Rolls"/>
    <property type="match status" value="1"/>
</dbReference>
<dbReference type="HAMAP" id="MF_01534">
    <property type="entry name" value="HTH_type_RhaS"/>
    <property type="match status" value="1"/>
</dbReference>
<dbReference type="InterPro" id="IPR003313">
    <property type="entry name" value="AraC-bd"/>
</dbReference>
<dbReference type="InterPro" id="IPR050204">
    <property type="entry name" value="AraC_XylS_family_regulators"/>
</dbReference>
<dbReference type="InterPro" id="IPR009057">
    <property type="entry name" value="Homeodomain-like_sf"/>
</dbReference>
<dbReference type="InterPro" id="IPR037923">
    <property type="entry name" value="HTH-like"/>
</dbReference>
<dbReference type="InterPro" id="IPR018060">
    <property type="entry name" value="HTH_AraC"/>
</dbReference>
<dbReference type="InterPro" id="IPR018062">
    <property type="entry name" value="HTH_AraC-typ_CS"/>
</dbReference>
<dbReference type="InterPro" id="IPR047220">
    <property type="entry name" value="RhaR_RhaS-like_N"/>
</dbReference>
<dbReference type="InterPro" id="IPR014710">
    <property type="entry name" value="RmlC-like_jellyroll"/>
</dbReference>
<dbReference type="InterPro" id="IPR020449">
    <property type="entry name" value="Tscrpt_reg_AraC-type_HTH"/>
</dbReference>
<dbReference type="InterPro" id="IPR023609">
    <property type="entry name" value="Tscrpt_reg_HTH_RhaS"/>
</dbReference>
<dbReference type="NCBIfam" id="NF010028">
    <property type="entry name" value="PRK13503.1"/>
    <property type="match status" value="1"/>
</dbReference>
<dbReference type="PANTHER" id="PTHR46796:SF13">
    <property type="entry name" value="HTH-TYPE TRANSCRIPTIONAL ACTIVATOR RHAS"/>
    <property type="match status" value="1"/>
</dbReference>
<dbReference type="PANTHER" id="PTHR46796">
    <property type="entry name" value="HTH-TYPE TRANSCRIPTIONAL ACTIVATOR RHAS-RELATED"/>
    <property type="match status" value="1"/>
</dbReference>
<dbReference type="Pfam" id="PF02311">
    <property type="entry name" value="AraC_binding"/>
    <property type="match status" value="1"/>
</dbReference>
<dbReference type="Pfam" id="PF12833">
    <property type="entry name" value="HTH_18"/>
    <property type="match status" value="1"/>
</dbReference>
<dbReference type="PRINTS" id="PR00032">
    <property type="entry name" value="HTHARAC"/>
</dbReference>
<dbReference type="SMART" id="SM00342">
    <property type="entry name" value="HTH_ARAC"/>
    <property type="match status" value="1"/>
</dbReference>
<dbReference type="SUPFAM" id="SSF46689">
    <property type="entry name" value="Homeodomain-like"/>
    <property type="match status" value="2"/>
</dbReference>
<dbReference type="SUPFAM" id="SSF51215">
    <property type="entry name" value="Regulatory protein AraC"/>
    <property type="match status" value="1"/>
</dbReference>
<dbReference type="PROSITE" id="PS00041">
    <property type="entry name" value="HTH_ARAC_FAMILY_1"/>
    <property type="match status" value="1"/>
</dbReference>
<dbReference type="PROSITE" id="PS01124">
    <property type="entry name" value="HTH_ARAC_FAMILY_2"/>
    <property type="match status" value="1"/>
</dbReference>
<gene>
    <name evidence="1" type="primary">rhaS</name>
    <name type="ordered locus">ECIAI39_3090</name>
</gene>
<name>RHAS_ECO7I</name>
<comment type="function">
    <text evidence="1">Activates expression of the rhaBAD and rhaT operons.</text>
</comment>
<comment type="subunit">
    <text evidence="1">Binds DNA as a dimer.</text>
</comment>
<comment type="subcellular location">
    <subcellularLocation>
        <location evidence="1">Cytoplasm</location>
    </subcellularLocation>
</comment>
<protein>
    <recommendedName>
        <fullName evidence="1">HTH-type transcriptional activator RhaS</fullName>
    </recommendedName>
    <alternativeName>
        <fullName evidence="1">L-rhamnose operon regulatory protein RhaS</fullName>
    </alternativeName>
</protein>
<evidence type="ECO:0000255" key="1">
    <source>
        <dbReference type="HAMAP-Rule" id="MF_01534"/>
    </source>
</evidence>
<feature type="chain" id="PRO_1000200954" description="HTH-type transcriptional activator RhaS">
    <location>
        <begin position="1"/>
        <end position="278"/>
    </location>
</feature>
<feature type="domain" description="HTH araC/xylS-type" evidence="1">
    <location>
        <begin position="174"/>
        <end position="272"/>
    </location>
</feature>
<feature type="DNA-binding region" description="H-T-H motif" evidence="1">
    <location>
        <begin position="191"/>
        <end position="212"/>
    </location>
</feature>
<feature type="DNA-binding region" description="H-T-H motif" evidence="1">
    <location>
        <begin position="239"/>
        <end position="262"/>
    </location>
</feature>
<feature type="site" description="Interaction with sigma-70" evidence="1">
    <location>
        <position position="241"/>
    </location>
</feature>
<feature type="site" description="Interaction with sigma-70" evidence="1">
    <location>
        <position position="250"/>
    </location>
</feature>
<proteinExistence type="inferred from homology"/>
<keyword id="KW-0010">Activator</keyword>
<keyword id="KW-0963">Cytoplasm</keyword>
<keyword id="KW-0238">DNA-binding</keyword>
<keyword id="KW-0677">Repeat</keyword>
<keyword id="KW-0684">Rhamnose metabolism</keyword>
<keyword id="KW-0804">Transcription</keyword>
<keyword id="KW-0805">Transcription regulation</keyword>